<reference key="1">
    <citation type="journal article" date="1988" name="J. Virol.">
        <title>Isolation and characterization of a hepatitis B virus endemic in herons.</title>
        <authorList>
            <person name="Sprengel R."/>
            <person name="Kaleta E.F."/>
            <person name="Will H."/>
        </authorList>
    </citation>
    <scope>NUCLEOTIDE SEQUENCE [GENOMIC DNA]</scope>
</reference>
<organismHost>
    <name type="scientific">Ardeidae</name>
    <name type="common">herons</name>
    <dbReference type="NCBI Taxonomy" id="8899"/>
</organismHost>
<organism>
    <name type="scientific">Heron hepatitis B virus</name>
    <name type="common">HHBV</name>
    <dbReference type="NCBI Taxonomy" id="28300"/>
    <lineage>
        <taxon>Viruses</taxon>
        <taxon>Riboviria</taxon>
        <taxon>Pararnavirae</taxon>
        <taxon>Artverviricota</taxon>
        <taxon>Revtraviricetes</taxon>
        <taxon>Blubervirales</taxon>
        <taxon>Hepadnaviridae</taxon>
        <taxon>Avihepadnavirus</taxon>
    </lineage>
</organism>
<feature type="chain" id="PRO_0000324349" description="Capsid protein">
    <location>
        <begin position="1"/>
        <end position="262"/>
    </location>
</feature>
<feature type="region of interest" description="Disordered" evidence="4">
    <location>
        <begin position="183"/>
        <end position="262"/>
    </location>
</feature>
<feature type="region of interest" description="RNA binding" evidence="1">
    <location>
        <begin position="254"/>
        <end position="260"/>
    </location>
</feature>
<feature type="short sequence motif" description="Bipartite nuclear localization signal" evidence="3">
    <location>
        <begin position="215"/>
        <end position="233"/>
    </location>
</feature>
<feature type="compositionally biased region" description="Basic residues" evidence="4">
    <location>
        <begin position="205"/>
        <end position="236"/>
    </location>
</feature>
<feature type="compositionally biased region" description="Polar residues" evidence="4">
    <location>
        <begin position="251"/>
        <end position="262"/>
    </location>
</feature>
<feature type="modified residue" description="Phosphoserine; by host" evidence="1">
    <location>
        <position position="232"/>
    </location>
</feature>
<feature type="modified residue" description="Phosphoserine; by host" evidence="1">
    <location>
        <position position="245"/>
    </location>
</feature>
<accession>P0C6K0</accession>
<keyword id="KW-0024">Alternative initiation</keyword>
<keyword id="KW-0167">Capsid protein</keyword>
<keyword id="KW-1176">Cytoplasmic inwards viral transport</keyword>
<keyword id="KW-0238">DNA-binding</keyword>
<keyword id="KW-1035">Host cytoplasm</keyword>
<keyword id="KW-0945">Host-virus interaction</keyword>
<keyword id="KW-1177">Microtubular inwards viral transport</keyword>
<keyword id="KW-0597">Phosphoprotein</keyword>
<keyword id="KW-0694">RNA-binding</keyword>
<keyword id="KW-1144">T=4 icosahedral capsid protein</keyword>
<keyword id="KW-1163">Viral penetration into host nucleus</keyword>
<keyword id="KW-0946">Virion</keyword>
<keyword id="KW-1160">Virus entry into host cell</keyword>
<dbReference type="EMBL" id="M22056">
    <property type="status" value="NOT_ANNOTATED_CDS"/>
    <property type="molecule type" value="Genomic_DNA"/>
</dbReference>
<dbReference type="SMR" id="P0C6K0"/>
<dbReference type="Proteomes" id="UP000008679">
    <property type="component" value="Genome"/>
</dbReference>
<dbReference type="GO" id="GO:0043657">
    <property type="term" value="C:host cell"/>
    <property type="evidence" value="ECO:0007669"/>
    <property type="project" value="GOC"/>
</dbReference>
<dbReference type="GO" id="GO:0030430">
    <property type="term" value="C:host cell cytoplasm"/>
    <property type="evidence" value="ECO:0007669"/>
    <property type="project" value="UniProtKB-SubCell"/>
</dbReference>
<dbReference type="GO" id="GO:0039619">
    <property type="term" value="C:T=4 icosahedral viral capsid"/>
    <property type="evidence" value="ECO:0007669"/>
    <property type="project" value="UniProtKB-KW"/>
</dbReference>
<dbReference type="GO" id="GO:0003677">
    <property type="term" value="F:DNA binding"/>
    <property type="evidence" value="ECO:0007669"/>
    <property type="project" value="UniProtKB-KW"/>
</dbReference>
<dbReference type="GO" id="GO:0003723">
    <property type="term" value="F:RNA binding"/>
    <property type="evidence" value="ECO:0007669"/>
    <property type="project" value="UniProtKB-KW"/>
</dbReference>
<dbReference type="GO" id="GO:0005198">
    <property type="term" value="F:structural molecule activity"/>
    <property type="evidence" value="ECO:0007669"/>
    <property type="project" value="InterPro"/>
</dbReference>
<dbReference type="GO" id="GO:0075521">
    <property type="term" value="P:microtubule-dependent intracellular transport of viral material towards nucleus"/>
    <property type="evidence" value="ECO:0007669"/>
    <property type="project" value="UniProtKB-KW"/>
</dbReference>
<dbReference type="GO" id="GO:0046718">
    <property type="term" value="P:symbiont entry into host cell"/>
    <property type="evidence" value="ECO:0007669"/>
    <property type="project" value="UniProtKB-KW"/>
</dbReference>
<dbReference type="GO" id="GO:0075732">
    <property type="term" value="P:viral penetration into host nucleus"/>
    <property type="evidence" value="ECO:0007669"/>
    <property type="project" value="UniProtKB-KW"/>
</dbReference>
<dbReference type="Gene3D" id="1.10.4090.10">
    <property type="entry name" value="Viral capsid, core domain supefamily, Hepatitis B virus"/>
    <property type="match status" value="1"/>
</dbReference>
<dbReference type="InterPro" id="IPR002006">
    <property type="entry name" value="Hepatitis_core"/>
</dbReference>
<dbReference type="InterPro" id="IPR036459">
    <property type="entry name" value="Viral_capsid_core_dom_sf_HBV"/>
</dbReference>
<dbReference type="Pfam" id="PF00906">
    <property type="entry name" value="Hepatitis_core"/>
    <property type="match status" value="1"/>
</dbReference>
<dbReference type="SUPFAM" id="SSF47852">
    <property type="entry name" value="Hepatitis B viral capsid (hbcag)"/>
    <property type="match status" value="1"/>
</dbReference>
<protein>
    <recommendedName>
        <fullName>Capsid protein</fullName>
    </recommendedName>
    <alternativeName>
        <fullName>Core antigen</fullName>
    </alternativeName>
    <alternativeName>
        <fullName>Core protein</fullName>
    </alternativeName>
    <alternativeName>
        <fullName>HBcAg</fullName>
    </alternativeName>
</protein>
<evidence type="ECO:0000250" key="1"/>
<evidence type="ECO:0000250" key="2">
    <source>
        <dbReference type="UniProtKB" id="P03148"/>
    </source>
</evidence>
<evidence type="ECO:0000255" key="3"/>
<evidence type="ECO:0000256" key="4">
    <source>
        <dbReference type="SAM" id="MobiDB-lite"/>
    </source>
</evidence>
<evidence type="ECO:0000305" key="5"/>
<sequence length="262" mass="30191">MDVNASRALANVYDLPDDFFPQIDDLVRDAKDALEPYWKAETIKKHVLIATHFVDLIEDFWQTTQGMSQIADALRAVIPPTTVPVPEGFLITHSEAEEIPLNDLFSNQEERIVNFQPDYPITARIHTHLRVYTKLNEQALDKARRLLWWHYNCLLWGEATVTNYISRLRTWLSTPEKYRGKDAPTIEAITRPIQVAQGGRNQTKGTRKPRGLEPRRRKVKTTVVYGRRRSKSRGRRSSPSQRAGSPLPRNRGNQTRSPSPRE</sequence>
<gene>
    <name type="primary">C</name>
</gene>
<comment type="function">
    <text evidence="1">Self assembles to form an icosahedral capsid. Most capsid appear to be large particles with an icosahedral symmetry of T=4 and consist of 240 copies of capsid protein, though a fraction forms smaller T=3 particles consisting of 180 capsid proteins. Entering capsid are transported along microtubules to the nucleus. Phosphorylation of the capsid is thought to induce exposure of nuclear localization signal in the C-terminal portion of the capsid protein that allows binding to the nuclear pore complex via the importin (karyopherin-) alpha and beta. Capsids are imported in intact form through the nuclear pore into the nuclear basket, where it probably binds NUP153. Only capsids that contain the mature viral genome can release the viral DNA and capsid protein into the nucleoplasm. Immature capsids get stucked in the basket. Capsids encapsulate the pre-genomic RNA and the P protein. Pre-genomic RNA is reverse transcribed into DNA while the capsid is still in the cytoplasm. The capsid can then either be directed to the nucleus, providing more genome for transcription, or bud through the endoplasmic reticulum to provide new virions (By similarity).</text>
</comment>
<comment type="subunit">
    <text evidence="1">Homodimerizes, then multimerizes.</text>
</comment>
<comment type="subcellular location">
    <molecule>Capsid protein</molecule>
    <subcellularLocation>
        <location evidence="2">Virion</location>
    </subcellularLocation>
    <subcellularLocation>
        <location evidence="2">Host cytoplasm</location>
    </subcellularLocation>
</comment>
<comment type="alternative products">
    <event type="alternative initiation"/>
    <isoform>
        <id>P0C6K0-1</id>
        <name>Capsid protein</name>
        <sequence type="displayed"/>
    </isoform>
    <isoform>
        <id>P13845-1</id>
        <name>External core antigen</name>
        <sequence type="external"/>
    </isoform>
</comment>
<comment type="similarity">
    <text evidence="5">Belongs to the avihepadnavirus core antigen family.</text>
</comment>
<proteinExistence type="inferred from homology"/>
<name>CAPSD_HHBV</name>